<proteinExistence type="inferred from homology"/>
<accession>A1VTA5</accession>
<name>HTPG_POLNA</name>
<feature type="chain" id="PRO_1000014938" description="Chaperone protein HtpG">
    <location>
        <begin position="1"/>
        <end position="629"/>
    </location>
</feature>
<feature type="region of interest" description="A; substrate-binding" evidence="1">
    <location>
        <begin position="1"/>
        <end position="343"/>
    </location>
</feature>
<feature type="region of interest" description="B" evidence="1">
    <location>
        <begin position="344"/>
        <end position="558"/>
    </location>
</feature>
<feature type="region of interest" description="C" evidence="1">
    <location>
        <begin position="559"/>
        <end position="629"/>
    </location>
</feature>
<gene>
    <name evidence="1" type="primary">htpG</name>
    <name type="ordered locus">Pnap_3587</name>
</gene>
<keyword id="KW-0067">ATP-binding</keyword>
<keyword id="KW-0143">Chaperone</keyword>
<keyword id="KW-0963">Cytoplasm</keyword>
<keyword id="KW-0547">Nucleotide-binding</keyword>
<keyword id="KW-1185">Reference proteome</keyword>
<keyword id="KW-0346">Stress response</keyword>
<evidence type="ECO:0000255" key="1">
    <source>
        <dbReference type="HAMAP-Rule" id="MF_00505"/>
    </source>
</evidence>
<organism>
    <name type="scientific">Polaromonas naphthalenivorans (strain CJ2)</name>
    <dbReference type="NCBI Taxonomy" id="365044"/>
    <lineage>
        <taxon>Bacteria</taxon>
        <taxon>Pseudomonadati</taxon>
        <taxon>Pseudomonadota</taxon>
        <taxon>Betaproteobacteria</taxon>
        <taxon>Burkholderiales</taxon>
        <taxon>Comamonadaceae</taxon>
        <taxon>Polaromonas</taxon>
    </lineage>
</organism>
<sequence length="629" mass="69812">MQKQTLSFQAEVAQLLKLVTHSLYSNPDIFLRELISNASDACDKLRFEALNDAGLYENDSELKVRVSFDKAAKTLTITDNGIGMSQQEAIEHLGTIAKSGTRDFVAKLSGDQKNDAQLIGQFGVGFYSGFIVADKITVESRRAGLPAAQGVRWVSEGTGEFDVSETLRAERGTSIILHLKDDAADYLNAWKLKGIINKYSDHISLPILMPKEEWKEGENDQPGEMAFTGEWETVNQAAALWTRPKKDITPEHYAEFYKQISYDSEAPLATTHNRVEGATEYTQLLFIPAKAPMDMYNRDKAAGVKLYVKRVFIMDDAQALLPTYLRFVKGVVDSSDLPLNVSRELLQESRAVKAIREGCTKRVLSMIEDLANNEPEKFKTFYAEFGAVLKEGLGEDFANRERLAKLLRFASSTTDTTTVSFADYKARMKDGQDAIYYITADTLAAAKSSPQLEIFRKKGIEVLLMADRVDEWALNYLNEFDGTPLQSVAKGAVDLGKLQDEDEKKAAEEAQTQFKPILDKLKEALKDKASDVRATSRLVDSPACLVVQDGDMSTQLARMLKQAGQTVPEVKPILEVNAQHPLVRKLEASSELASFDDLANILFDQALLAEGGMPTDPAAYVRRVNALLV</sequence>
<protein>
    <recommendedName>
        <fullName evidence="1">Chaperone protein HtpG</fullName>
    </recommendedName>
    <alternativeName>
        <fullName evidence="1">Heat shock protein HtpG</fullName>
    </alternativeName>
    <alternativeName>
        <fullName evidence="1">High temperature protein G</fullName>
    </alternativeName>
</protein>
<comment type="function">
    <text evidence="1">Molecular chaperone. Has ATPase activity.</text>
</comment>
<comment type="subunit">
    <text evidence="1">Homodimer.</text>
</comment>
<comment type="subcellular location">
    <subcellularLocation>
        <location evidence="1">Cytoplasm</location>
    </subcellularLocation>
</comment>
<comment type="similarity">
    <text evidence="1">Belongs to the heat shock protein 90 family.</text>
</comment>
<reference key="1">
    <citation type="journal article" date="2009" name="Environ. Microbiol.">
        <title>The genome of Polaromonas naphthalenivorans strain CJ2, isolated from coal tar-contaminated sediment, reveals physiological and metabolic versatility and evolution through extensive horizontal gene transfer.</title>
        <authorList>
            <person name="Yagi J.M."/>
            <person name="Sims D."/>
            <person name="Brettin T."/>
            <person name="Bruce D."/>
            <person name="Madsen E.L."/>
        </authorList>
    </citation>
    <scope>NUCLEOTIDE SEQUENCE [LARGE SCALE GENOMIC DNA]</scope>
    <source>
        <strain>CJ2</strain>
    </source>
</reference>
<dbReference type="EMBL" id="CP000529">
    <property type="protein sequence ID" value="ABM38883.1"/>
    <property type="molecule type" value="Genomic_DNA"/>
</dbReference>
<dbReference type="RefSeq" id="WP_011802953.1">
    <property type="nucleotide sequence ID" value="NC_008781.1"/>
</dbReference>
<dbReference type="SMR" id="A1VTA5"/>
<dbReference type="STRING" id="365044.Pnap_3587"/>
<dbReference type="KEGG" id="pna:Pnap_3587"/>
<dbReference type="eggNOG" id="COG0326">
    <property type="taxonomic scope" value="Bacteria"/>
</dbReference>
<dbReference type="HOGENOM" id="CLU_006684_3_0_4"/>
<dbReference type="OrthoDB" id="9802640at2"/>
<dbReference type="Proteomes" id="UP000000644">
    <property type="component" value="Chromosome"/>
</dbReference>
<dbReference type="GO" id="GO:0005737">
    <property type="term" value="C:cytoplasm"/>
    <property type="evidence" value="ECO:0007669"/>
    <property type="project" value="UniProtKB-SubCell"/>
</dbReference>
<dbReference type="GO" id="GO:0005524">
    <property type="term" value="F:ATP binding"/>
    <property type="evidence" value="ECO:0007669"/>
    <property type="project" value="UniProtKB-UniRule"/>
</dbReference>
<dbReference type="GO" id="GO:0016887">
    <property type="term" value="F:ATP hydrolysis activity"/>
    <property type="evidence" value="ECO:0007669"/>
    <property type="project" value="InterPro"/>
</dbReference>
<dbReference type="GO" id="GO:0140662">
    <property type="term" value="F:ATP-dependent protein folding chaperone"/>
    <property type="evidence" value="ECO:0007669"/>
    <property type="project" value="InterPro"/>
</dbReference>
<dbReference type="GO" id="GO:0051082">
    <property type="term" value="F:unfolded protein binding"/>
    <property type="evidence" value="ECO:0007669"/>
    <property type="project" value="UniProtKB-UniRule"/>
</dbReference>
<dbReference type="CDD" id="cd16927">
    <property type="entry name" value="HATPase_Hsp90-like"/>
    <property type="match status" value="1"/>
</dbReference>
<dbReference type="FunFam" id="3.30.230.80:FF:000002">
    <property type="entry name" value="Molecular chaperone HtpG"/>
    <property type="match status" value="1"/>
</dbReference>
<dbReference type="FunFam" id="3.30.565.10:FF:000009">
    <property type="entry name" value="Molecular chaperone HtpG"/>
    <property type="match status" value="1"/>
</dbReference>
<dbReference type="Gene3D" id="3.30.230.80">
    <property type="match status" value="1"/>
</dbReference>
<dbReference type="Gene3D" id="3.40.50.11260">
    <property type="match status" value="1"/>
</dbReference>
<dbReference type="Gene3D" id="1.20.120.790">
    <property type="entry name" value="Heat shock protein 90, C-terminal domain"/>
    <property type="match status" value="1"/>
</dbReference>
<dbReference type="Gene3D" id="3.30.565.10">
    <property type="entry name" value="Histidine kinase-like ATPase, C-terminal domain"/>
    <property type="match status" value="1"/>
</dbReference>
<dbReference type="HAMAP" id="MF_00505">
    <property type="entry name" value="HSP90"/>
    <property type="match status" value="1"/>
</dbReference>
<dbReference type="InterPro" id="IPR036890">
    <property type="entry name" value="HATPase_C_sf"/>
</dbReference>
<dbReference type="InterPro" id="IPR037196">
    <property type="entry name" value="HSP90_C"/>
</dbReference>
<dbReference type="InterPro" id="IPR001404">
    <property type="entry name" value="Hsp90_fam"/>
</dbReference>
<dbReference type="InterPro" id="IPR020575">
    <property type="entry name" value="Hsp90_N"/>
</dbReference>
<dbReference type="InterPro" id="IPR020568">
    <property type="entry name" value="Ribosomal_Su5_D2-typ_SF"/>
</dbReference>
<dbReference type="NCBIfam" id="NF003555">
    <property type="entry name" value="PRK05218.1"/>
    <property type="match status" value="1"/>
</dbReference>
<dbReference type="PANTHER" id="PTHR11528">
    <property type="entry name" value="HEAT SHOCK PROTEIN 90 FAMILY MEMBER"/>
    <property type="match status" value="1"/>
</dbReference>
<dbReference type="Pfam" id="PF13589">
    <property type="entry name" value="HATPase_c_3"/>
    <property type="match status" value="1"/>
</dbReference>
<dbReference type="Pfam" id="PF00183">
    <property type="entry name" value="HSP90"/>
    <property type="match status" value="1"/>
</dbReference>
<dbReference type="PIRSF" id="PIRSF002583">
    <property type="entry name" value="Hsp90"/>
    <property type="match status" value="1"/>
</dbReference>
<dbReference type="PRINTS" id="PR00775">
    <property type="entry name" value="HEATSHOCK90"/>
</dbReference>
<dbReference type="SMART" id="SM00387">
    <property type="entry name" value="HATPase_c"/>
    <property type="match status" value="1"/>
</dbReference>
<dbReference type="SUPFAM" id="SSF55874">
    <property type="entry name" value="ATPase domain of HSP90 chaperone/DNA topoisomerase II/histidine kinase"/>
    <property type="match status" value="1"/>
</dbReference>
<dbReference type="SUPFAM" id="SSF110942">
    <property type="entry name" value="HSP90 C-terminal domain"/>
    <property type="match status" value="1"/>
</dbReference>
<dbReference type="SUPFAM" id="SSF54211">
    <property type="entry name" value="Ribosomal protein S5 domain 2-like"/>
    <property type="match status" value="1"/>
</dbReference>